<sequence length="192" mass="21691">MLPPALNIPKWLEENSHLLQPPVNNYCVYHPSSPATAGYTVMIVGGPNARTDYHINTTPEFFYQYRGSMLLKTADTSVSPPVFQDIPIHEGSIFLLPANTPHCPVRFKDTVGVVMEQPRPKDAVDTMLWFCKKCGEVVWEKRFVCTDLGTQVKEVVEEFAADQEKRTCKACGTIAETRYQEGEIVQPPRFLE</sequence>
<protein>
    <recommendedName>
        <fullName evidence="1">3-hydroxyanthranilate 3,4-dioxygenase</fullName>
        <ecNumber evidence="1">1.13.11.6</ecNumber>
    </recommendedName>
    <alternativeName>
        <fullName evidence="1">3-hydroxyanthranilate oxygenase</fullName>
        <shortName evidence="1">3-HAO</shortName>
    </alternativeName>
    <alternativeName>
        <fullName evidence="1">3-hydroxyanthranilic acid dioxygenase</fullName>
        <shortName evidence="1">HAD</shortName>
    </alternativeName>
    <alternativeName>
        <fullName evidence="1">Biosynthesis of nicotinic acid protein 1</fullName>
    </alternativeName>
</protein>
<evidence type="ECO:0000255" key="1">
    <source>
        <dbReference type="HAMAP-Rule" id="MF_03019"/>
    </source>
</evidence>
<keyword id="KW-0963">Cytoplasm</keyword>
<keyword id="KW-0223">Dioxygenase</keyword>
<keyword id="KW-0408">Iron</keyword>
<keyword id="KW-0479">Metal-binding</keyword>
<keyword id="KW-0560">Oxidoreductase</keyword>
<keyword id="KW-0662">Pyridine nucleotide biosynthesis</keyword>
<keyword id="KW-1185">Reference proteome</keyword>
<organism>
    <name type="scientific">Neosartorya fischeri (strain ATCC 1020 / DSM 3700 / CBS 544.65 / FGSC A1164 / JCM 1740 / NRRL 181 / WB 181)</name>
    <name type="common">Aspergillus fischerianus</name>
    <dbReference type="NCBI Taxonomy" id="331117"/>
    <lineage>
        <taxon>Eukaryota</taxon>
        <taxon>Fungi</taxon>
        <taxon>Dikarya</taxon>
        <taxon>Ascomycota</taxon>
        <taxon>Pezizomycotina</taxon>
        <taxon>Eurotiomycetes</taxon>
        <taxon>Eurotiomycetidae</taxon>
        <taxon>Eurotiales</taxon>
        <taxon>Aspergillaceae</taxon>
        <taxon>Aspergillus</taxon>
        <taxon>Aspergillus subgen. Fumigati</taxon>
    </lineage>
</organism>
<gene>
    <name type="primary">bna1</name>
    <name type="ORF">NFIA_097440</name>
</gene>
<comment type="function">
    <text evidence="1">Catalyzes the oxidative ring opening of 3-hydroxyanthranilate to 2-amino-3-carboxymuconate semialdehyde, which spontaneously cyclizes to quinolinate.</text>
</comment>
<comment type="catalytic activity">
    <reaction evidence="1">
        <text>3-hydroxyanthranilate + O2 = (2Z,4Z)-2-amino-3-carboxymuconate 6-semialdehyde</text>
        <dbReference type="Rhea" id="RHEA:17953"/>
        <dbReference type="ChEBI" id="CHEBI:15379"/>
        <dbReference type="ChEBI" id="CHEBI:36559"/>
        <dbReference type="ChEBI" id="CHEBI:77612"/>
        <dbReference type="EC" id="1.13.11.6"/>
    </reaction>
</comment>
<comment type="cofactor">
    <cofactor evidence="1">
        <name>Fe(2+)</name>
        <dbReference type="ChEBI" id="CHEBI:29033"/>
    </cofactor>
</comment>
<comment type="pathway">
    <text evidence="1">Cofactor biosynthesis; NAD(+) biosynthesis; quinolinate from L-kynurenine: step 3/3.</text>
</comment>
<comment type="subcellular location">
    <subcellularLocation>
        <location evidence="1">Cytoplasm</location>
    </subcellularLocation>
</comment>
<comment type="similarity">
    <text evidence="1">Belongs to the 3-HAO family.</text>
</comment>
<name>3HAO_NEOFI</name>
<dbReference type="EC" id="1.13.11.6" evidence="1"/>
<dbReference type="EMBL" id="DS027694">
    <property type="protein sequence ID" value="EAW20116.1"/>
    <property type="molecule type" value="Genomic_DNA"/>
</dbReference>
<dbReference type="RefSeq" id="XP_001262013.1">
    <property type="nucleotide sequence ID" value="XM_001262012.1"/>
</dbReference>
<dbReference type="SMR" id="A1DB76"/>
<dbReference type="STRING" id="331117.A1DB76"/>
<dbReference type="EnsemblFungi" id="EAW20116">
    <property type="protein sequence ID" value="EAW20116"/>
    <property type="gene ID" value="NFIA_097440"/>
</dbReference>
<dbReference type="GeneID" id="4588745"/>
<dbReference type="KEGG" id="nfi:NFIA_097440"/>
<dbReference type="VEuPathDB" id="FungiDB:NFIA_097440"/>
<dbReference type="eggNOG" id="KOG3995">
    <property type="taxonomic scope" value="Eukaryota"/>
</dbReference>
<dbReference type="HOGENOM" id="CLU_095765_0_0_1"/>
<dbReference type="OMA" id="KPPVGNQ"/>
<dbReference type="OrthoDB" id="204928at2759"/>
<dbReference type="UniPathway" id="UPA00253">
    <property type="reaction ID" value="UER00330"/>
</dbReference>
<dbReference type="Proteomes" id="UP000006702">
    <property type="component" value="Unassembled WGS sequence"/>
</dbReference>
<dbReference type="GO" id="GO:0005737">
    <property type="term" value="C:cytoplasm"/>
    <property type="evidence" value="ECO:0007669"/>
    <property type="project" value="UniProtKB-SubCell"/>
</dbReference>
<dbReference type="GO" id="GO:0000334">
    <property type="term" value="F:3-hydroxyanthranilate 3,4-dioxygenase activity"/>
    <property type="evidence" value="ECO:0007669"/>
    <property type="project" value="UniProtKB-UniRule"/>
</dbReference>
<dbReference type="GO" id="GO:0008198">
    <property type="term" value="F:ferrous iron binding"/>
    <property type="evidence" value="ECO:0007669"/>
    <property type="project" value="UniProtKB-UniRule"/>
</dbReference>
<dbReference type="GO" id="GO:0034354">
    <property type="term" value="P:'de novo' NAD biosynthetic process from L-tryptophan"/>
    <property type="evidence" value="ECO:0007669"/>
    <property type="project" value="UniProtKB-UniRule"/>
</dbReference>
<dbReference type="GO" id="GO:0043420">
    <property type="term" value="P:anthranilate metabolic process"/>
    <property type="evidence" value="ECO:0007669"/>
    <property type="project" value="UniProtKB-UniRule"/>
</dbReference>
<dbReference type="GO" id="GO:0006569">
    <property type="term" value="P:L-tryptophan catabolic process"/>
    <property type="evidence" value="ECO:0007669"/>
    <property type="project" value="UniProtKB-UniRule"/>
</dbReference>
<dbReference type="GO" id="GO:0019805">
    <property type="term" value="P:quinolinate biosynthetic process"/>
    <property type="evidence" value="ECO:0007669"/>
    <property type="project" value="UniProtKB-UniRule"/>
</dbReference>
<dbReference type="CDD" id="cd06123">
    <property type="entry name" value="cupin_HAO"/>
    <property type="match status" value="1"/>
</dbReference>
<dbReference type="FunFam" id="2.60.120.10:FF:000093">
    <property type="entry name" value="3-hydroxyanthranilate 3,4-dioxygenase"/>
    <property type="match status" value="1"/>
</dbReference>
<dbReference type="Gene3D" id="2.60.120.10">
    <property type="entry name" value="Jelly Rolls"/>
    <property type="match status" value="1"/>
</dbReference>
<dbReference type="HAMAP" id="MF_00825">
    <property type="entry name" value="3_HAO"/>
    <property type="match status" value="1"/>
</dbReference>
<dbReference type="InterPro" id="IPR010329">
    <property type="entry name" value="3hydroanth_dOase"/>
</dbReference>
<dbReference type="InterPro" id="IPR014710">
    <property type="entry name" value="RmlC-like_jellyroll"/>
</dbReference>
<dbReference type="InterPro" id="IPR011051">
    <property type="entry name" value="RmlC_Cupin_sf"/>
</dbReference>
<dbReference type="NCBIfam" id="TIGR03037">
    <property type="entry name" value="anthran_nbaC"/>
    <property type="match status" value="1"/>
</dbReference>
<dbReference type="PANTHER" id="PTHR15497">
    <property type="entry name" value="3-HYDROXYANTHRANILATE 3,4-DIOXYGENASE"/>
    <property type="match status" value="1"/>
</dbReference>
<dbReference type="PANTHER" id="PTHR15497:SF1">
    <property type="entry name" value="3-HYDROXYANTHRANILATE 3,4-DIOXYGENASE"/>
    <property type="match status" value="1"/>
</dbReference>
<dbReference type="Pfam" id="PF06052">
    <property type="entry name" value="3-HAO"/>
    <property type="match status" value="1"/>
</dbReference>
<dbReference type="SUPFAM" id="SSF51182">
    <property type="entry name" value="RmlC-like cupins"/>
    <property type="match status" value="1"/>
</dbReference>
<feature type="chain" id="PRO_0000361990" description="3-hydroxyanthranilate 3,4-dioxygenase">
    <location>
        <begin position="1"/>
        <end position="192"/>
    </location>
</feature>
<feature type="binding site" evidence="1">
    <location>
        <position position="50"/>
    </location>
    <ligand>
        <name>O2</name>
        <dbReference type="ChEBI" id="CHEBI:15379"/>
    </ligand>
</feature>
<feature type="binding site" evidence="1">
    <location>
        <position position="54"/>
    </location>
    <ligand>
        <name>Fe cation</name>
        <dbReference type="ChEBI" id="CHEBI:24875"/>
        <note>catalytic</note>
    </ligand>
</feature>
<feature type="binding site" evidence="1">
    <location>
        <position position="60"/>
    </location>
    <ligand>
        <name>Fe cation</name>
        <dbReference type="ChEBI" id="CHEBI:24875"/>
        <note>catalytic</note>
    </ligand>
</feature>
<feature type="binding site" evidence="1">
    <location>
        <position position="60"/>
    </location>
    <ligand>
        <name>substrate</name>
    </ligand>
</feature>
<feature type="binding site" evidence="1">
    <location>
        <position position="102"/>
    </location>
    <ligand>
        <name>Fe cation</name>
        <dbReference type="ChEBI" id="CHEBI:24875"/>
        <note>catalytic</note>
    </ligand>
</feature>
<feature type="binding site" evidence="1">
    <location>
        <position position="106"/>
    </location>
    <ligand>
        <name>substrate</name>
    </ligand>
</feature>
<feature type="binding site" evidence="1">
    <location>
        <position position="116"/>
    </location>
    <ligand>
        <name>substrate</name>
    </ligand>
</feature>
<feature type="binding site" evidence="1">
    <location>
        <position position="131"/>
    </location>
    <ligand>
        <name>a divalent metal cation</name>
        <dbReference type="ChEBI" id="CHEBI:60240"/>
    </ligand>
</feature>
<feature type="binding site" evidence="1">
    <location>
        <position position="134"/>
    </location>
    <ligand>
        <name>a divalent metal cation</name>
        <dbReference type="ChEBI" id="CHEBI:60240"/>
    </ligand>
</feature>
<feature type="binding site" evidence="1">
    <location>
        <position position="168"/>
    </location>
    <ligand>
        <name>a divalent metal cation</name>
        <dbReference type="ChEBI" id="CHEBI:60240"/>
    </ligand>
</feature>
<feature type="binding site" evidence="1">
    <location>
        <position position="171"/>
    </location>
    <ligand>
        <name>a divalent metal cation</name>
        <dbReference type="ChEBI" id="CHEBI:60240"/>
    </ligand>
</feature>
<reference key="1">
    <citation type="journal article" date="2008" name="PLoS Genet.">
        <title>Genomic islands in the pathogenic filamentous fungus Aspergillus fumigatus.</title>
        <authorList>
            <person name="Fedorova N.D."/>
            <person name="Khaldi N."/>
            <person name="Joardar V.S."/>
            <person name="Maiti R."/>
            <person name="Amedeo P."/>
            <person name="Anderson M.J."/>
            <person name="Crabtree J."/>
            <person name="Silva J.C."/>
            <person name="Badger J.H."/>
            <person name="Albarraq A."/>
            <person name="Angiuoli S."/>
            <person name="Bussey H."/>
            <person name="Bowyer P."/>
            <person name="Cotty P.J."/>
            <person name="Dyer P.S."/>
            <person name="Egan A."/>
            <person name="Galens K."/>
            <person name="Fraser-Liggett C.M."/>
            <person name="Haas B.J."/>
            <person name="Inman J.M."/>
            <person name="Kent R."/>
            <person name="Lemieux S."/>
            <person name="Malavazi I."/>
            <person name="Orvis J."/>
            <person name="Roemer T."/>
            <person name="Ronning C.M."/>
            <person name="Sundaram J.P."/>
            <person name="Sutton G."/>
            <person name="Turner G."/>
            <person name="Venter J.C."/>
            <person name="White O.R."/>
            <person name="Whitty B.R."/>
            <person name="Youngman P."/>
            <person name="Wolfe K.H."/>
            <person name="Goldman G.H."/>
            <person name="Wortman J.R."/>
            <person name="Jiang B."/>
            <person name="Denning D.W."/>
            <person name="Nierman W.C."/>
        </authorList>
    </citation>
    <scope>NUCLEOTIDE SEQUENCE [LARGE SCALE GENOMIC DNA]</scope>
    <source>
        <strain>ATCC 1020 / DSM 3700 / CBS 544.65 / FGSC A1164 / JCM 1740 / NRRL 181 / WB 181</strain>
    </source>
</reference>
<proteinExistence type="inferred from homology"/>
<accession>A1DB76</accession>